<sequence>MFDLEYQLKNLPDKPGVYLMKNNLGEIIYVGKAKILKNRVRQYFQKSQKHSEKVKAMVKNIEEFEYIITDSEIEALILECNLIKKYRPKYNILLKDDKHYPFIKVTLAEDFPRVVSTRKVTKDGSKYFGPYVDGSSVKDIIELIKKTFPIRTCKKNIVEGAKAIRPCLNYQIGLCKAPCAQYIKKSEYREIIDDVIKLLSGKHLDIVENFKLNMEKAAENLEFEKAAMLRDKINIIEKIGEKQKIILNNFDNEDYISLYSDGKDTCFQVFFLRNGKIVGREHFIIEDTFDTNSSTLISNFLKEFYGGTAYIPKTIYVPSIEDEALLEQWLTLKKESKSTIKIPIKGEKKNILVLVEKNAKTTLENFKLKYLQEKALYDNVLKDLKNILRLQEEPIRIEAFDISNIQGFDSVGSMVVFEKGRAKPSDYRRFKINTVKGADDYKSMKEILTRRFQHGLSEIKSIQDRKLEFSSGKFSVFPDLILMDGGKGQINIALEVLNTFNIDIPVCGMVKDNKHRTRGLIYNGEEIIINKYGSVMKFITRVQDEVHRFAISYHRSLRGKNSFHSLLDDIPNIGEKRKKDLLFNFKSIDNIKKATYEELLSIPSMDKKSAECVLEFFK</sequence>
<evidence type="ECO:0000255" key="1">
    <source>
        <dbReference type="HAMAP-Rule" id="MF_00203"/>
    </source>
</evidence>
<accession>B1IFW6</accession>
<protein>
    <recommendedName>
        <fullName evidence="1">UvrABC system protein C</fullName>
        <shortName evidence="1">Protein UvrC</shortName>
    </recommendedName>
    <alternativeName>
        <fullName evidence="1">Excinuclease ABC subunit C</fullName>
    </alternativeName>
</protein>
<feature type="chain" id="PRO_1000099470" description="UvrABC system protein C">
    <location>
        <begin position="1"/>
        <end position="618"/>
    </location>
</feature>
<feature type="domain" description="GIY-YIG" evidence="1">
    <location>
        <begin position="13"/>
        <end position="92"/>
    </location>
</feature>
<feature type="domain" description="UVR" evidence="1">
    <location>
        <begin position="204"/>
        <end position="239"/>
    </location>
</feature>
<keyword id="KW-0963">Cytoplasm</keyword>
<keyword id="KW-0227">DNA damage</keyword>
<keyword id="KW-0228">DNA excision</keyword>
<keyword id="KW-0234">DNA repair</keyword>
<keyword id="KW-0267">Excision nuclease</keyword>
<keyword id="KW-0742">SOS response</keyword>
<comment type="function">
    <text evidence="1">The UvrABC repair system catalyzes the recognition and processing of DNA lesions. UvrC both incises the 5' and 3' sides of the lesion. The N-terminal half is responsible for the 3' incision and the C-terminal half is responsible for the 5' incision.</text>
</comment>
<comment type="subunit">
    <text evidence="1">Interacts with UvrB in an incision complex.</text>
</comment>
<comment type="subcellular location">
    <subcellularLocation>
        <location evidence="1">Cytoplasm</location>
    </subcellularLocation>
</comment>
<comment type="similarity">
    <text evidence="1">Belongs to the UvrC family.</text>
</comment>
<gene>
    <name evidence="1" type="primary">uvrC</name>
    <name type="ordered locus">CLD_1128</name>
</gene>
<organism>
    <name type="scientific">Clostridium botulinum (strain Okra / Type B1)</name>
    <dbReference type="NCBI Taxonomy" id="498213"/>
    <lineage>
        <taxon>Bacteria</taxon>
        <taxon>Bacillati</taxon>
        <taxon>Bacillota</taxon>
        <taxon>Clostridia</taxon>
        <taxon>Eubacteriales</taxon>
        <taxon>Clostridiaceae</taxon>
        <taxon>Clostridium</taxon>
    </lineage>
</organism>
<proteinExistence type="inferred from homology"/>
<name>UVRC_CLOBK</name>
<reference key="1">
    <citation type="journal article" date="2007" name="PLoS ONE">
        <title>Analysis of the neurotoxin complex genes in Clostridium botulinum A1-A4 and B1 strains: BoNT/A3, /Ba4 and /B1 clusters are located within plasmids.</title>
        <authorList>
            <person name="Smith T.J."/>
            <person name="Hill K.K."/>
            <person name="Foley B.T."/>
            <person name="Detter J.C."/>
            <person name="Munk A.C."/>
            <person name="Bruce D.C."/>
            <person name="Doggett N.A."/>
            <person name="Smith L.A."/>
            <person name="Marks J.D."/>
            <person name="Xie G."/>
            <person name="Brettin T.S."/>
        </authorList>
    </citation>
    <scope>NUCLEOTIDE SEQUENCE [LARGE SCALE GENOMIC DNA]</scope>
    <source>
        <strain>Okra / Type B1</strain>
    </source>
</reference>
<dbReference type="EMBL" id="CP000939">
    <property type="protein sequence ID" value="ACA45375.1"/>
    <property type="molecule type" value="Genomic_DNA"/>
</dbReference>
<dbReference type="RefSeq" id="WP_015957852.1">
    <property type="nucleotide sequence ID" value="NC_010516.1"/>
</dbReference>
<dbReference type="SMR" id="B1IFW6"/>
<dbReference type="KEGG" id="cbb:CLD_1128"/>
<dbReference type="HOGENOM" id="CLU_014841_3_2_9"/>
<dbReference type="Proteomes" id="UP000008541">
    <property type="component" value="Chromosome"/>
</dbReference>
<dbReference type="GO" id="GO:0005737">
    <property type="term" value="C:cytoplasm"/>
    <property type="evidence" value="ECO:0007669"/>
    <property type="project" value="UniProtKB-SubCell"/>
</dbReference>
<dbReference type="GO" id="GO:0009380">
    <property type="term" value="C:excinuclease repair complex"/>
    <property type="evidence" value="ECO:0007669"/>
    <property type="project" value="InterPro"/>
</dbReference>
<dbReference type="GO" id="GO:0003677">
    <property type="term" value="F:DNA binding"/>
    <property type="evidence" value="ECO:0007669"/>
    <property type="project" value="UniProtKB-UniRule"/>
</dbReference>
<dbReference type="GO" id="GO:0009381">
    <property type="term" value="F:excinuclease ABC activity"/>
    <property type="evidence" value="ECO:0007669"/>
    <property type="project" value="UniProtKB-UniRule"/>
</dbReference>
<dbReference type="GO" id="GO:0006289">
    <property type="term" value="P:nucleotide-excision repair"/>
    <property type="evidence" value="ECO:0007669"/>
    <property type="project" value="UniProtKB-UniRule"/>
</dbReference>
<dbReference type="GO" id="GO:0009432">
    <property type="term" value="P:SOS response"/>
    <property type="evidence" value="ECO:0007669"/>
    <property type="project" value="UniProtKB-UniRule"/>
</dbReference>
<dbReference type="CDD" id="cd10434">
    <property type="entry name" value="GIY-YIG_UvrC_Cho"/>
    <property type="match status" value="1"/>
</dbReference>
<dbReference type="FunFam" id="3.40.1440.10:FF:000001">
    <property type="entry name" value="UvrABC system protein C"/>
    <property type="match status" value="1"/>
</dbReference>
<dbReference type="Gene3D" id="1.10.150.20">
    <property type="entry name" value="5' to 3' exonuclease, C-terminal subdomain"/>
    <property type="match status" value="1"/>
</dbReference>
<dbReference type="Gene3D" id="3.40.1440.10">
    <property type="entry name" value="GIY-YIG endonuclease"/>
    <property type="match status" value="1"/>
</dbReference>
<dbReference type="Gene3D" id="4.10.860.10">
    <property type="entry name" value="UVR domain"/>
    <property type="match status" value="1"/>
</dbReference>
<dbReference type="Gene3D" id="3.30.420.340">
    <property type="entry name" value="UvrC, RNAse H endonuclease domain"/>
    <property type="match status" value="1"/>
</dbReference>
<dbReference type="HAMAP" id="MF_00203">
    <property type="entry name" value="UvrC"/>
    <property type="match status" value="1"/>
</dbReference>
<dbReference type="InterPro" id="IPR041663">
    <property type="entry name" value="DisA/LigA_HHH"/>
</dbReference>
<dbReference type="InterPro" id="IPR000305">
    <property type="entry name" value="GIY-YIG_endonuc"/>
</dbReference>
<dbReference type="InterPro" id="IPR035901">
    <property type="entry name" value="GIY-YIG_endonuc_sf"/>
</dbReference>
<dbReference type="InterPro" id="IPR047296">
    <property type="entry name" value="GIY-YIG_UvrC_Cho"/>
</dbReference>
<dbReference type="InterPro" id="IPR010994">
    <property type="entry name" value="RuvA_2-like"/>
</dbReference>
<dbReference type="InterPro" id="IPR001943">
    <property type="entry name" value="UVR_dom"/>
</dbReference>
<dbReference type="InterPro" id="IPR036876">
    <property type="entry name" value="UVR_dom_sf"/>
</dbReference>
<dbReference type="InterPro" id="IPR050066">
    <property type="entry name" value="UvrABC_protein_C"/>
</dbReference>
<dbReference type="InterPro" id="IPR004791">
    <property type="entry name" value="UvrC"/>
</dbReference>
<dbReference type="InterPro" id="IPR001162">
    <property type="entry name" value="UvrC_RNase_H_dom"/>
</dbReference>
<dbReference type="InterPro" id="IPR038476">
    <property type="entry name" value="UvrC_RNase_H_dom_sf"/>
</dbReference>
<dbReference type="NCBIfam" id="NF001824">
    <property type="entry name" value="PRK00558.1-5"/>
    <property type="match status" value="1"/>
</dbReference>
<dbReference type="NCBIfam" id="TIGR00194">
    <property type="entry name" value="uvrC"/>
    <property type="match status" value="1"/>
</dbReference>
<dbReference type="PANTHER" id="PTHR30562:SF1">
    <property type="entry name" value="UVRABC SYSTEM PROTEIN C"/>
    <property type="match status" value="1"/>
</dbReference>
<dbReference type="PANTHER" id="PTHR30562">
    <property type="entry name" value="UVRC/OXIDOREDUCTASE"/>
    <property type="match status" value="1"/>
</dbReference>
<dbReference type="Pfam" id="PF01541">
    <property type="entry name" value="GIY-YIG"/>
    <property type="match status" value="1"/>
</dbReference>
<dbReference type="Pfam" id="PF12826">
    <property type="entry name" value="HHH_2"/>
    <property type="match status" value="1"/>
</dbReference>
<dbReference type="Pfam" id="PF02151">
    <property type="entry name" value="UVR"/>
    <property type="match status" value="1"/>
</dbReference>
<dbReference type="Pfam" id="PF22920">
    <property type="entry name" value="UvrC_RNaseH"/>
    <property type="match status" value="1"/>
</dbReference>
<dbReference type="Pfam" id="PF08459">
    <property type="entry name" value="UvrC_RNaseH_dom"/>
    <property type="match status" value="1"/>
</dbReference>
<dbReference type="SMART" id="SM00465">
    <property type="entry name" value="GIYc"/>
    <property type="match status" value="1"/>
</dbReference>
<dbReference type="SUPFAM" id="SSF46600">
    <property type="entry name" value="C-terminal UvrC-binding domain of UvrB"/>
    <property type="match status" value="1"/>
</dbReference>
<dbReference type="SUPFAM" id="SSF82771">
    <property type="entry name" value="GIY-YIG endonuclease"/>
    <property type="match status" value="1"/>
</dbReference>
<dbReference type="SUPFAM" id="SSF47781">
    <property type="entry name" value="RuvA domain 2-like"/>
    <property type="match status" value="1"/>
</dbReference>
<dbReference type="PROSITE" id="PS50164">
    <property type="entry name" value="GIY_YIG"/>
    <property type="match status" value="1"/>
</dbReference>
<dbReference type="PROSITE" id="PS50151">
    <property type="entry name" value="UVR"/>
    <property type="match status" value="1"/>
</dbReference>
<dbReference type="PROSITE" id="PS50165">
    <property type="entry name" value="UVRC"/>
    <property type="match status" value="1"/>
</dbReference>